<organism>
    <name type="scientific">Methylocella silvestris (strain DSM 15510 / CIP 108128 / LMG 27833 / NCIMB 13906 / BL2)</name>
    <dbReference type="NCBI Taxonomy" id="395965"/>
    <lineage>
        <taxon>Bacteria</taxon>
        <taxon>Pseudomonadati</taxon>
        <taxon>Pseudomonadota</taxon>
        <taxon>Alphaproteobacteria</taxon>
        <taxon>Hyphomicrobiales</taxon>
        <taxon>Beijerinckiaceae</taxon>
        <taxon>Methylocella</taxon>
    </lineage>
</organism>
<keyword id="KW-0997">Cell inner membrane</keyword>
<keyword id="KW-1003">Cell membrane</keyword>
<keyword id="KW-0407">Ion channel</keyword>
<keyword id="KW-0406">Ion transport</keyword>
<keyword id="KW-0472">Membrane</keyword>
<keyword id="KW-1185">Reference proteome</keyword>
<keyword id="KW-0812">Transmembrane</keyword>
<keyword id="KW-1133">Transmembrane helix</keyword>
<keyword id="KW-0813">Transport</keyword>
<proteinExistence type="inferred from homology"/>
<name>MSCL_METSB</name>
<protein>
    <recommendedName>
        <fullName evidence="1">Large-conductance mechanosensitive channel</fullName>
    </recommendedName>
</protein>
<dbReference type="EMBL" id="CP001280">
    <property type="protein sequence ID" value="ACK52537.1"/>
    <property type="molecule type" value="Genomic_DNA"/>
</dbReference>
<dbReference type="RefSeq" id="WP_012592605.1">
    <property type="nucleotide sequence ID" value="NC_011666.1"/>
</dbReference>
<dbReference type="SMR" id="B8EJ45"/>
<dbReference type="STRING" id="395965.Msil_3652"/>
<dbReference type="KEGG" id="msl:Msil_3652"/>
<dbReference type="eggNOG" id="COG1970">
    <property type="taxonomic scope" value="Bacteria"/>
</dbReference>
<dbReference type="HOGENOM" id="CLU_095787_0_1_5"/>
<dbReference type="OrthoDB" id="9810350at2"/>
<dbReference type="Proteomes" id="UP000002257">
    <property type="component" value="Chromosome"/>
</dbReference>
<dbReference type="GO" id="GO:0005886">
    <property type="term" value="C:plasma membrane"/>
    <property type="evidence" value="ECO:0007669"/>
    <property type="project" value="UniProtKB-SubCell"/>
</dbReference>
<dbReference type="GO" id="GO:0008381">
    <property type="term" value="F:mechanosensitive monoatomic ion channel activity"/>
    <property type="evidence" value="ECO:0007669"/>
    <property type="project" value="UniProtKB-UniRule"/>
</dbReference>
<dbReference type="Gene3D" id="1.10.1200.120">
    <property type="entry name" value="Large-conductance mechanosensitive channel, MscL, domain 1"/>
    <property type="match status" value="1"/>
</dbReference>
<dbReference type="HAMAP" id="MF_00115">
    <property type="entry name" value="MscL"/>
    <property type="match status" value="1"/>
</dbReference>
<dbReference type="InterPro" id="IPR001185">
    <property type="entry name" value="MS_channel"/>
</dbReference>
<dbReference type="InterPro" id="IPR037673">
    <property type="entry name" value="MSC/AndL"/>
</dbReference>
<dbReference type="InterPro" id="IPR036019">
    <property type="entry name" value="MscL_channel"/>
</dbReference>
<dbReference type="NCBIfam" id="TIGR00220">
    <property type="entry name" value="mscL"/>
    <property type="match status" value="1"/>
</dbReference>
<dbReference type="NCBIfam" id="NF001843">
    <property type="entry name" value="PRK00567.1-4"/>
    <property type="match status" value="1"/>
</dbReference>
<dbReference type="NCBIfam" id="NF010557">
    <property type="entry name" value="PRK13952.1"/>
    <property type="match status" value="1"/>
</dbReference>
<dbReference type="PANTHER" id="PTHR30266:SF2">
    <property type="entry name" value="LARGE-CONDUCTANCE MECHANOSENSITIVE CHANNEL"/>
    <property type="match status" value="1"/>
</dbReference>
<dbReference type="PANTHER" id="PTHR30266">
    <property type="entry name" value="MECHANOSENSITIVE CHANNEL MSCL"/>
    <property type="match status" value="1"/>
</dbReference>
<dbReference type="Pfam" id="PF01741">
    <property type="entry name" value="MscL"/>
    <property type="match status" value="1"/>
</dbReference>
<dbReference type="PRINTS" id="PR01264">
    <property type="entry name" value="MECHCHANNEL"/>
</dbReference>
<dbReference type="SUPFAM" id="SSF81330">
    <property type="entry name" value="Gated mechanosensitive channel"/>
    <property type="match status" value="1"/>
</dbReference>
<comment type="function">
    <text evidence="1">Channel that opens in response to stretch forces in the membrane lipid bilayer. May participate in the regulation of osmotic pressure changes within the cell.</text>
</comment>
<comment type="subunit">
    <text evidence="1">Homopentamer.</text>
</comment>
<comment type="subcellular location">
    <subcellularLocation>
        <location evidence="1">Cell inner membrane</location>
        <topology evidence="1">Multi-pass membrane protein</topology>
    </subcellularLocation>
</comment>
<comment type="similarity">
    <text evidence="1">Belongs to the MscL family.</text>
</comment>
<evidence type="ECO:0000255" key="1">
    <source>
        <dbReference type="HAMAP-Rule" id="MF_00115"/>
    </source>
</evidence>
<sequence>MLKEFKEFALRGNLIDLAIGFIIGAAFSGLVQSVVNDIIMPIVGRITGGVDFSNLYWQLSGAPQPTLALARQAGATIAYGNFITLLINFLIVAFVLFLAVKALNKVTPKPDPASTQPPKQEVLLEQIRDLLARK</sequence>
<gene>
    <name evidence="1" type="primary">mscL</name>
    <name type="ordered locus">Msil_3652</name>
</gene>
<reference key="1">
    <citation type="journal article" date="2010" name="J. Bacteriol.">
        <title>Complete genome sequence of the aerobic facultative methanotroph Methylocella silvestris BL2.</title>
        <authorList>
            <person name="Chen Y."/>
            <person name="Crombie A."/>
            <person name="Rahman M.T."/>
            <person name="Dedysh S.N."/>
            <person name="Liesack W."/>
            <person name="Stott M.B."/>
            <person name="Alam M."/>
            <person name="Theisen A.R."/>
            <person name="Murrell J.C."/>
            <person name="Dunfield P.F."/>
        </authorList>
    </citation>
    <scope>NUCLEOTIDE SEQUENCE [LARGE SCALE GENOMIC DNA]</scope>
    <source>
        <strain>DSM 15510 / CIP 108128 / LMG 27833 / NCIMB 13906 / BL2</strain>
    </source>
</reference>
<feature type="chain" id="PRO_1000191379" description="Large-conductance mechanosensitive channel">
    <location>
        <begin position="1"/>
        <end position="134"/>
    </location>
</feature>
<feature type="transmembrane region" description="Helical" evidence="1">
    <location>
        <begin position="15"/>
        <end position="35"/>
    </location>
</feature>
<feature type="transmembrane region" description="Helical" evidence="1">
    <location>
        <begin position="80"/>
        <end position="100"/>
    </location>
</feature>
<accession>B8EJ45</accession>